<organism>
    <name type="scientific">Arabidopsis thaliana</name>
    <name type="common">Mouse-ear cress</name>
    <dbReference type="NCBI Taxonomy" id="3702"/>
    <lineage>
        <taxon>Eukaryota</taxon>
        <taxon>Viridiplantae</taxon>
        <taxon>Streptophyta</taxon>
        <taxon>Embryophyta</taxon>
        <taxon>Tracheophyta</taxon>
        <taxon>Spermatophyta</taxon>
        <taxon>Magnoliopsida</taxon>
        <taxon>eudicotyledons</taxon>
        <taxon>Gunneridae</taxon>
        <taxon>Pentapetalae</taxon>
        <taxon>rosids</taxon>
        <taxon>malvids</taxon>
        <taxon>Brassicales</taxon>
        <taxon>Brassicaceae</taxon>
        <taxon>Camelineae</taxon>
        <taxon>Arabidopsis</taxon>
    </lineage>
</organism>
<name>PLAS2_ARATH</name>
<feature type="transit peptide" description="Chloroplast" evidence="2">
    <location>
        <begin position="1"/>
        <end position="52"/>
    </location>
</feature>
<feature type="transit peptide" description="Thylakoid" evidence="3 4 5">
    <location>
        <begin position="53"/>
        <end position="68"/>
    </location>
</feature>
<feature type="chain" id="PRO_0000002885" description="Plastocyanin major isoform, chloroplastic">
    <location>
        <begin position="69"/>
        <end position="167"/>
    </location>
</feature>
<feature type="domain" description="Plastocyanin-like">
    <location>
        <begin position="69"/>
        <end position="167"/>
    </location>
</feature>
<feature type="binding site" evidence="1">
    <location>
        <position position="105"/>
    </location>
    <ligand>
        <name>Cu cation</name>
        <dbReference type="ChEBI" id="CHEBI:23378"/>
    </ligand>
</feature>
<feature type="binding site" evidence="1">
    <location>
        <position position="152"/>
    </location>
    <ligand>
        <name>Cu cation</name>
        <dbReference type="ChEBI" id="CHEBI:23378"/>
    </ligand>
</feature>
<feature type="binding site" evidence="1">
    <location>
        <position position="155"/>
    </location>
    <ligand>
        <name>Cu cation</name>
        <dbReference type="ChEBI" id="CHEBI:23378"/>
    </ligand>
</feature>
<feature type="binding site" evidence="1">
    <location>
        <position position="160"/>
    </location>
    <ligand>
        <name>Cu cation</name>
        <dbReference type="ChEBI" id="CHEBI:23378"/>
    </ligand>
</feature>
<feature type="sequence conflict" description="In Ref. 1; AAA32787." evidence="7" ref="1">
    <original>A</original>
    <variation>T</variation>
    <location>
        <position position="7"/>
    </location>
</feature>
<feature type="sequence conflict" description="In Ref. 1; AAA32787." evidence="7" ref="1">
    <original>A</original>
    <variation>P</variation>
    <location>
        <position position="10"/>
    </location>
</feature>
<feature type="sequence conflict" description="In Ref. 1; AAA32787." evidence="7" ref="1">
    <original>I</original>
    <variation>T</variation>
    <location>
        <position position="22"/>
    </location>
</feature>
<feature type="sequence conflict" description="In Ref. 1; AAA32787." evidence="7" ref="1">
    <original>I</original>
    <variation>T</variation>
    <location>
        <position position="30"/>
    </location>
</feature>
<feature type="sequence conflict" description="In Ref. 1; AAA32787." evidence="7" ref="1">
    <original>A</original>
    <variation>P</variation>
    <location>
        <position position="56"/>
    </location>
</feature>
<feature type="sequence conflict" description="In Ref. 6; AAM64356." evidence="7" ref="6">
    <original>V</original>
    <variation>I</variation>
    <location>
        <position position="164"/>
    </location>
</feature>
<feature type="sequence conflict" description="In Ref. 2; CAB66894." evidence="7" ref="2">
    <original>V</original>
    <variation>G</variation>
    <location>
        <position position="166"/>
    </location>
</feature>
<gene>
    <name type="primary">DRT112</name>
    <name type="ordered locus">At1g20340</name>
    <name type="ORF">F14O10.6</name>
    <name type="ORF">F14O10_4</name>
    <name type="ORF">K3F10TP</name>
</gene>
<sequence>MASVTSATVAIPSFTGLKASTIKSSATVRIQTAAVASPKLTVKSSLKNFGVAAVAAAASIALAGNAMAIEVLLGGGDGSLAFIPNDFSIAKGEKIVFKNNAGYPHNVVFDEDEIPSGVDVAKISMDEQDLLNGAGETYEVALTEPGTYSFYCAPHQGAGMVGKVTVN</sequence>
<comment type="function">
    <text evidence="3">Participates in electron transfer between P700 and the cytochrome b6-f complex in photosystem I. Seems to be the major plastocyanin in Arabidopsis.</text>
</comment>
<comment type="cofactor">
    <cofactor evidence="1">
        <name>Cu(2+)</name>
        <dbReference type="ChEBI" id="CHEBI:29036"/>
    </cofactor>
</comment>
<comment type="subcellular location">
    <subcellularLocation>
        <location evidence="3 4 6">Plastid</location>
        <location evidence="3 4 6">Chloroplast thylakoid membrane</location>
        <topology evidence="3">Peripheral membrane protein</topology>
        <orientation evidence="3">Lumenal side</orientation>
    </subcellularLocation>
    <text>Loosely bound to the chloroplast thylakoid inner membrane surface (PubMed:11034343).</text>
</comment>
<comment type="similarity">
    <text evidence="7">Belongs to the plastocyanin family.</text>
</comment>
<comment type="caution">
    <text evidence="8">Was originally thought to be involved in the resistance to UV light and chemical DNA-damaging agents.</text>
</comment>
<proteinExistence type="evidence at protein level"/>
<accession>P42699</accession>
<accession>Q6UB15</accession>
<accession>Q8LD06</accession>
<accession>Q9LN26</accession>
<evidence type="ECO:0000250" key="1">
    <source>
        <dbReference type="UniProtKB" id="P18068"/>
    </source>
</evidence>
<evidence type="ECO:0000255" key="2"/>
<evidence type="ECO:0000269" key="3">
    <source>
    </source>
</evidence>
<evidence type="ECO:0000269" key="4">
    <source>
    </source>
</evidence>
<evidence type="ECO:0000269" key="5">
    <source>
    </source>
</evidence>
<evidence type="ECO:0000269" key="6">
    <source>
    </source>
</evidence>
<evidence type="ECO:0000305" key="7"/>
<evidence type="ECO:0000305" key="8">
    <source>
    </source>
</evidence>
<keyword id="KW-0150">Chloroplast</keyword>
<keyword id="KW-0186">Copper</keyword>
<keyword id="KW-0903">Direct protein sequencing</keyword>
<keyword id="KW-0249">Electron transport</keyword>
<keyword id="KW-0472">Membrane</keyword>
<keyword id="KW-0479">Metal-binding</keyword>
<keyword id="KW-0934">Plastid</keyword>
<keyword id="KW-1185">Reference proteome</keyword>
<keyword id="KW-0793">Thylakoid</keyword>
<keyword id="KW-0809">Transit peptide</keyword>
<keyword id="KW-0813">Transport</keyword>
<reference key="1">
    <citation type="journal article" date="1993" name="Nucleic Acids Res.">
        <title>Two cDNAs from the plant Arabidopsis thaliana that partially restore recombination proficiency and DNA-damage resistance to E. coli mutants lacking recombination-intermediate-resolution activities.</title>
        <authorList>
            <person name="Pang Q."/>
            <person name="Hays J.B."/>
            <person name="Rajagopal I."/>
        </authorList>
    </citation>
    <scope>NUCLEOTIDE SEQUENCE [MRNA]</scope>
    <source>
        <strain>cv. Columbia</strain>
    </source>
</reference>
<reference key="2">
    <citation type="journal article" date="2000" name="FEBS Lett.">
        <title>A peroxidase homologue and novel plastocyanin located by proteomics to the Arabidopsis chloroplast thylakoid lumen.</title>
        <authorList>
            <person name="Kieselbach T."/>
            <person name="Bystedt M."/>
            <person name="Hynds P."/>
            <person name="Robinson C."/>
            <person name="Schroeder W.P."/>
        </authorList>
    </citation>
    <scope>NUCLEOTIDE SEQUENCE [GENOMIC DNA]</scope>
    <scope>PROTEIN SEQUENCE OF 69-88</scope>
    <scope>CHARACTERIZATION</scope>
    <scope>SUBCELLULAR LOCATION</scope>
    <source>
        <strain>cv. Columbia</strain>
    </source>
</reference>
<reference key="3">
    <citation type="journal article" date="2000" name="Nature">
        <title>Sequence and analysis of chromosome 1 of the plant Arabidopsis thaliana.</title>
        <authorList>
            <person name="Theologis A."/>
            <person name="Ecker J.R."/>
            <person name="Palm C.J."/>
            <person name="Federspiel N.A."/>
            <person name="Kaul S."/>
            <person name="White O."/>
            <person name="Alonso J."/>
            <person name="Altafi H."/>
            <person name="Araujo R."/>
            <person name="Bowman C.L."/>
            <person name="Brooks S.Y."/>
            <person name="Buehler E."/>
            <person name="Chan A."/>
            <person name="Chao Q."/>
            <person name="Chen H."/>
            <person name="Cheuk R.F."/>
            <person name="Chin C.W."/>
            <person name="Chung M.K."/>
            <person name="Conn L."/>
            <person name="Conway A.B."/>
            <person name="Conway A.R."/>
            <person name="Creasy T.H."/>
            <person name="Dewar K."/>
            <person name="Dunn P."/>
            <person name="Etgu P."/>
            <person name="Feldblyum T.V."/>
            <person name="Feng J.-D."/>
            <person name="Fong B."/>
            <person name="Fujii C.Y."/>
            <person name="Gill J.E."/>
            <person name="Goldsmith A.D."/>
            <person name="Haas B."/>
            <person name="Hansen N.F."/>
            <person name="Hughes B."/>
            <person name="Huizar L."/>
            <person name="Hunter J.L."/>
            <person name="Jenkins J."/>
            <person name="Johnson-Hopson C."/>
            <person name="Khan S."/>
            <person name="Khaykin E."/>
            <person name="Kim C.J."/>
            <person name="Koo H.L."/>
            <person name="Kremenetskaia I."/>
            <person name="Kurtz D.B."/>
            <person name="Kwan A."/>
            <person name="Lam B."/>
            <person name="Langin-Hooper S."/>
            <person name="Lee A."/>
            <person name="Lee J.M."/>
            <person name="Lenz C.A."/>
            <person name="Li J.H."/>
            <person name="Li Y.-P."/>
            <person name="Lin X."/>
            <person name="Liu S.X."/>
            <person name="Liu Z.A."/>
            <person name="Luros J.S."/>
            <person name="Maiti R."/>
            <person name="Marziali A."/>
            <person name="Militscher J."/>
            <person name="Miranda M."/>
            <person name="Nguyen M."/>
            <person name="Nierman W.C."/>
            <person name="Osborne B.I."/>
            <person name="Pai G."/>
            <person name="Peterson J."/>
            <person name="Pham P.K."/>
            <person name="Rizzo M."/>
            <person name="Rooney T."/>
            <person name="Rowley D."/>
            <person name="Sakano H."/>
            <person name="Salzberg S.L."/>
            <person name="Schwartz J.R."/>
            <person name="Shinn P."/>
            <person name="Southwick A.M."/>
            <person name="Sun H."/>
            <person name="Tallon L.J."/>
            <person name="Tambunga G."/>
            <person name="Toriumi M.J."/>
            <person name="Town C.D."/>
            <person name="Utterback T."/>
            <person name="Van Aken S."/>
            <person name="Vaysberg M."/>
            <person name="Vysotskaia V.S."/>
            <person name="Walker M."/>
            <person name="Wu D."/>
            <person name="Yu G."/>
            <person name="Fraser C.M."/>
            <person name="Venter J.C."/>
            <person name="Davis R.W."/>
        </authorList>
    </citation>
    <scope>NUCLEOTIDE SEQUENCE [LARGE SCALE GENOMIC DNA]</scope>
    <source>
        <strain>cv. Columbia</strain>
    </source>
</reference>
<reference key="4">
    <citation type="journal article" date="2017" name="Plant J.">
        <title>Araport11: a complete reannotation of the Arabidopsis thaliana reference genome.</title>
        <authorList>
            <person name="Cheng C.Y."/>
            <person name="Krishnakumar V."/>
            <person name="Chan A.P."/>
            <person name="Thibaud-Nissen F."/>
            <person name="Schobel S."/>
            <person name="Town C.D."/>
        </authorList>
    </citation>
    <scope>GENOME REANNOTATION</scope>
    <source>
        <strain>cv. Columbia</strain>
    </source>
</reference>
<reference key="5">
    <citation type="journal article" date="2003" name="Science">
        <title>Empirical analysis of transcriptional activity in the Arabidopsis genome.</title>
        <authorList>
            <person name="Yamada K."/>
            <person name="Lim J."/>
            <person name="Dale J.M."/>
            <person name="Chen H."/>
            <person name="Shinn P."/>
            <person name="Palm C.J."/>
            <person name="Southwick A.M."/>
            <person name="Wu H.C."/>
            <person name="Kim C.J."/>
            <person name="Nguyen M."/>
            <person name="Pham P.K."/>
            <person name="Cheuk R.F."/>
            <person name="Karlin-Newmann G."/>
            <person name="Liu S.X."/>
            <person name="Lam B."/>
            <person name="Sakano H."/>
            <person name="Wu T."/>
            <person name="Yu G."/>
            <person name="Miranda M."/>
            <person name="Quach H.L."/>
            <person name="Tripp M."/>
            <person name="Chang C.H."/>
            <person name="Lee J.M."/>
            <person name="Toriumi M.J."/>
            <person name="Chan M.M."/>
            <person name="Tang C.C."/>
            <person name="Onodera C.S."/>
            <person name="Deng J.M."/>
            <person name="Akiyama K."/>
            <person name="Ansari Y."/>
            <person name="Arakawa T."/>
            <person name="Banh J."/>
            <person name="Banno F."/>
            <person name="Bowser L."/>
            <person name="Brooks S.Y."/>
            <person name="Carninci P."/>
            <person name="Chao Q."/>
            <person name="Choy N."/>
            <person name="Enju A."/>
            <person name="Goldsmith A.D."/>
            <person name="Gurjal M."/>
            <person name="Hansen N.F."/>
            <person name="Hayashizaki Y."/>
            <person name="Johnson-Hopson C."/>
            <person name="Hsuan V.W."/>
            <person name="Iida K."/>
            <person name="Karnes M."/>
            <person name="Khan S."/>
            <person name="Koesema E."/>
            <person name="Ishida J."/>
            <person name="Jiang P.X."/>
            <person name="Jones T."/>
            <person name="Kawai J."/>
            <person name="Kamiya A."/>
            <person name="Meyers C."/>
            <person name="Nakajima M."/>
            <person name="Narusaka M."/>
            <person name="Seki M."/>
            <person name="Sakurai T."/>
            <person name="Satou M."/>
            <person name="Tamse R."/>
            <person name="Vaysberg M."/>
            <person name="Wallender E.K."/>
            <person name="Wong C."/>
            <person name="Yamamura Y."/>
            <person name="Yuan S."/>
            <person name="Shinozaki K."/>
            <person name="Davis R.W."/>
            <person name="Theologis A."/>
            <person name="Ecker J.R."/>
        </authorList>
    </citation>
    <scope>NUCLEOTIDE SEQUENCE [LARGE SCALE MRNA]</scope>
    <source>
        <strain>cv. Columbia</strain>
    </source>
</reference>
<reference key="6">
    <citation type="submission" date="2002-03" db="EMBL/GenBank/DDBJ databases">
        <title>Full-length cDNA from Arabidopsis thaliana.</title>
        <authorList>
            <person name="Brover V.V."/>
            <person name="Troukhan M.E."/>
            <person name="Alexandrov N.A."/>
            <person name="Lu Y.-P."/>
            <person name="Flavell R.B."/>
            <person name="Feldmann K.A."/>
        </authorList>
    </citation>
    <scope>NUCLEOTIDE SEQUENCE [LARGE SCALE MRNA]</scope>
</reference>
<reference key="7">
    <citation type="submission" date="2003-08" db="EMBL/GenBank/DDBJ databases">
        <title>Plant/T-DNA junction of SALK_135199.</title>
        <authorList>
            <person name="Strzalka W.K."/>
        </authorList>
    </citation>
    <scope>NUCLEOTIDE SEQUENCE [GENOMIC DNA] OF 107-167</scope>
    <source>
        <strain>cv. Columbia</strain>
    </source>
</reference>
<reference key="8">
    <citation type="journal article" date="2002" name="J. Biol. Chem.">
        <title>Proteome map of the chloroplast lumen of Arabidopsis thaliana.</title>
        <authorList>
            <person name="Schubert M."/>
            <person name="Petersson U.A."/>
            <person name="Haas B.J."/>
            <person name="Funk C."/>
            <person name="Schroeder W.P."/>
            <person name="Kieselbach T."/>
        </authorList>
    </citation>
    <scope>PROTEIN SEQUENCE OF 69-97</scope>
    <scope>SUBCELLULAR LOCATION</scope>
</reference>
<reference key="9">
    <citation type="journal article" date="2002" name="Plant Cell">
        <title>Central functions of the lumenal and peripheral thylakoid proteome of Arabidopsis determined by experimentation and genome-wide prediction.</title>
        <authorList>
            <person name="Peltier J.-B."/>
            <person name="Emanuelsson O."/>
            <person name="Kalume D.E."/>
            <person name="Ytterberg J."/>
            <person name="Friso G."/>
            <person name="Rudella A."/>
            <person name="Liberles D.A."/>
            <person name="Soederberg L."/>
            <person name="Roepstorff P."/>
            <person name="von Heijne G."/>
            <person name="van Wijk K.J."/>
        </authorList>
    </citation>
    <scope>PROTEIN SEQUENCE OF N-TERMINUS</scope>
    <scope>IDENTIFICATION BY MASS SPECTROMETRY</scope>
</reference>
<reference key="10">
    <citation type="journal article" date="2008" name="PLoS ONE">
        <title>Sorting signals, N-terminal modifications and abundance of the chloroplast proteome.</title>
        <authorList>
            <person name="Zybailov B."/>
            <person name="Rutschow H."/>
            <person name="Friso G."/>
            <person name="Rudella A."/>
            <person name="Emanuelsson O."/>
            <person name="Sun Q."/>
            <person name="van Wijk K.J."/>
        </authorList>
    </citation>
    <scope>IDENTIFICATION BY MASS SPECTROMETRY</scope>
    <scope>SUBCELLULAR LOCATION [LARGE SCALE ANALYSIS]</scope>
</reference>
<dbReference type="EMBL" id="M98456">
    <property type="protein sequence ID" value="AAA32787.1"/>
    <property type="molecule type" value="mRNA"/>
</dbReference>
<dbReference type="EMBL" id="AJ271355">
    <property type="protein sequence ID" value="CAB66894.1"/>
    <property type="molecule type" value="Genomic_DNA"/>
</dbReference>
<dbReference type="EMBL" id="AC026234">
    <property type="protein sequence ID" value="AAF88155.1"/>
    <property type="molecule type" value="Genomic_DNA"/>
</dbReference>
<dbReference type="EMBL" id="CP002684">
    <property type="protein sequence ID" value="AEE29963.1"/>
    <property type="molecule type" value="Genomic_DNA"/>
</dbReference>
<dbReference type="EMBL" id="AF324702">
    <property type="protein sequence ID" value="AAG40053.1"/>
    <property type="molecule type" value="mRNA"/>
</dbReference>
<dbReference type="EMBL" id="AF326879">
    <property type="protein sequence ID" value="AAG41461.1"/>
    <property type="molecule type" value="mRNA"/>
</dbReference>
<dbReference type="EMBL" id="AF334383">
    <property type="protein sequence ID" value="AAG50089.1"/>
    <property type="molecule type" value="mRNA"/>
</dbReference>
<dbReference type="EMBL" id="AF361853">
    <property type="protein sequence ID" value="AAK32865.1"/>
    <property type="molecule type" value="mRNA"/>
</dbReference>
<dbReference type="EMBL" id="BT001030">
    <property type="protein sequence ID" value="AAN46784.1"/>
    <property type="molecule type" value="mRNA"/>
</dbReference>
<dbReference type="EMBL" id="AY086284">
    <property type="protein sequence ID" value="AAM64356.1"/>
    <property type="molecule type" value="mRNA"/>
</dbReference>
<dbReference type="EMBL" id="AY374308">
    <property type="protein sequence ID" value="AAR15395.1"/>
    <property type="molecule type" value="Genomic_DNA"/>
</dbReference>
<dbReference type="PIR" id="B86337">
    <property type="entry name" value="B86337"/>
</dbReference>
<dbReference type="PIR" id="PA0004">
    <property type="entry name" value="PA0004"/>
</dbReference>
<dbReference type="PIR" id="S33707">
    <property type="entry name" value="S33707"/>
</dbReference>
<dbReference type="RefSeq" id="NP_173459.1">
    <property type="nucleotide sequence ID" value="NM_101885.3"/>
</dbReference>
<dbReference type="SMR" id="P42699"/>
<dbReference type="BioGRID" id="23861">
    <property type="interactions" value="2"/>
</dbReference>
<dbReference type="FunCoup" id="P42699">
    <property type="interactions" value="1150"/>
</dbReference>
<dbReference type="STRING" id="3702.P42699"/>
<dbReference type="PaxDb" id="3702-AT1G20340.1"/>
<dbReference type="ProteomicsDB" id="235035"/>
<dbReference type="EnsemblPlants" id="AT1G20340.1">
    <property type="protein sequence ID" value="AT1G20340.1"/>
    <property type="gene ID" value="AT1G20340"/>
</dbReference>
<dbReference type="GeneID" id="838622"/>
<dbReference type="Gramene" id="AT1G20340.1">
    <property type="protein sequence ID" value="AT1G20340.1"/>
    <property type="gene ID" value="AT1G20340"/>
</dbReference>
<dbReference type="KEGG" id="ath:AT1G20340"/>
<dbReference type="Araport" id="AT1G20340"/>
<dbReference type="TAIR" id="AT1G20340">
    <property type="gene designation" value="DRT112"/>
</dbReference>
<dbReference type="eggNOG" id="ENOG502RXIY">
    <property type="taxonomic scope" value="Eukaryota"/>
</dbReference>
<dbReference type="HOGENOM" id="CLU_084115_0_0_1"/>
<dbReference type="InParanoid" id="P42699"/>
<dbReference type="OMA" id="YDYYCEP"/>
<dbReference type="OrthoDB" id="197281at2759"/>
<dbReference type="PhylomeDB" id="P42699"/>
<dbReference type="CD-CODE" id="4299E36E">
    <property type="entry name" value="Nucleolus"/>
</dbReference>
<dbReference type="PRO" id="PR:P42699"/>
<dbReference type="Proteomes" id="UP000006548">
    <property type="component" value="Chromosome 1"/>
</dbReference>
<dbReference type="ExpressionAtlas" id="P42699">
    <property type="expression patterns" value="baseline and differential"/>
</dbReference>
<dbReference type="GO" id="GO:0009507">
    <property type="term" value="C:chloroplast"/>
    <property type="evidence" value="ECO:0007005"/>
    <property type="project" value="TAIR"/>
</dbReference>
<dbReference type="GO" id="GO:0009570">
    <property type="term" value="C:chloroplast stroma"/>
    <property type="evidence" value="ECO:0007005"/>
    <property type="project" value="TAIR"/>
</dbReference>
<dbReference type="GO" id="GO:0009534">
    <property type="term" value="C:chloroplast thylakoid"/>
    <property type="evidence" value="ECO:0007005"/>
    <property type="project" value="TAIR"/>
</dbReference>
<dbReference type="GO" id="GO:0009535">
    <property type="term" value="C:chloroplast thylakoid membrane"/>
    <property type="evidence" value="ECO:0007669"/>
    <property type="project" value="UniProtKB-SubCell"/>
</dbReference>
<dbReference type="GO" id="GO:0005634">
    <property type="term" value="C:nucleus"/>
    <property type="evidence" value="ECO:0007005"/>
    <property type="project" value="TAIR"/>
</dbReference>
<dbReference type="GO" id="GO:0055035">
    <property type="term" value="C:plastid thylakoid membrane"/>
    <property type="evidence" value="ECO:0000314"/>
    <property type="project" value="TAIR"/>
</dbReference>
<dbReference type="GO" id="GO:0009579">
    <property type="term" value="C:thylakoid"/>
    <property type="evidence" value="ECO:0007005"/>
    <property type="project" value="TAIR"/>
</dbReference>
<dbReference type="GO" id="GO:0031977">
    <property type="term" value="C:thylakoid lumen"/>
    <property type="evidence" value="ECO:0007005"/>
    <property type="project" value="TAIR"/>
</dbReference>
<dbReference type="GO" id="GO:0005507">
    <property type="term" value="F:copper ion binding"/>
    <property type="evidence" value="ECO:0007669"/>
    <property type="project" value="InterPro"/>
</dbReference>
<dbReference type="GO" id="GO:0046028">
    <property type="term" value="F:electron transporter, transferring electrons from cytochrome b6/f complex of photosystem II activity"/>
    <property type="evidence" value="ECO:0000316"/>
    <property type="project" value="CACAO"/>
</dbReference>
<dbReference type="GO" id="GO:0019904">
    <property type="term" value="F:protein domain specific binding"/>
    <property type="evidence" value="ECO:0000353"/>
    <property type="project" value="CAFA"/>
</dbReference>
<dbReference type="GO" id="GO:0055070">
    <property type="term" value="P:copper ion homeostasis"/>
    <property type="evidence" value="ECO:0000315"/>
    <property type="project" value="TAIR"/>
</dbReference>
<dbReference type="GO" id="GO:0017148">
    <property type="term" value="P:negative regulation of translation"/>
    <property type="evidence" value="ECO:0000315"/>
    <property type="project" value="TAIR"/>
</dbReference>
<dbReference type="GO" id="GO:0046688">
    <property type="term" value="P:response to copper ion"/>
    <property type="evidence" value="ECO:0000270"/>
    <property type="project" value="TAIR"/>
</dbReference>
<dbReference type="CDD" id="cd04219">
    <property type="entry name" value="Plastocyanin"/>
    <property type="match status" value="1"/>
</dbReference>
<dbReference type="Gene3D" id="2.60.40.420">
    <property type="entry name" value="Cupredoxins - blue copper proteins"/>
    <property type="match status" value="1"/>
</dbReference>
<dbReference type="InterPro" id="IPR000923">
    <property type="entry name" value="BlueCu_1"/>
</dbReference>
<dbReference type="InterPro" id="IPR028871">
    <property type="entry name" value="BlueCu_1_BS"/>
</dbReference>
<dbReference type="InterPro" id="IPR001235">
    <property type="entry name" value="Copper_blue_Plastocyanin"/>
</dbReference>
<dbReference type="InterPro" id="IPR008972">
    <property type="entry name" value="Cupredoxin"/>
</dbReference>
<dbReference type="InterPro" id="IPR002387">
    <property type="entry name" value="Plastocyanin"/>
</dbReference>
<dbReference type="NCBIfam" id="TIGR02656">
    <property type="entry name" value="cyanin_plasto"/>
    <property type="match status" value="1"/>
</dbReference>
<dbReference type="PANTHER" id="PTHR34192">
    <property type="entry name" value="PLASTOCYANIN MAJOR ISOFORM, CHLOROPLASTIC-RELATED"/>
    <property type="match status" value="1"/>
</dbReference>
<dbReference type="PANTHER" id="PTHR34192:SF10">
    <property type="entry name" value="PLASTOCYANIN MAJOR ISOFORM, CHLOROPLASTIC-RELATED"/>
    <property type="match status" value="1"/>
</dbReference>
<dbReference type="Pfam" id="PF00127">
    <property type="entry name" value="Copper-bind"/>
    <property type="match status" value="1"/>
</dbReference>
<dbReference type="PRINTS" id="PR00156">
    <property type="entry name" value="COPPERBLUE"/>
</dbReference>
<dbReference type="PRINTS" id="PR00157">
    <property type="entry name" value="PLASTOCYANIN"/>
</dbReference>
<dbReference type="SUPFAM" id="SSF49503">
    <property type="entry name" value="Cupredoxins"/>
    <property type="match status" value="1"/>
</dbReference>
<dbReference type="PROSITE" id="PS00196">
    <property type="entry name" value="COPPER_BLUE"/>
    <property type="match status" value="1"/>
</dbReference>
<protein>
    <recommendedName>
        <fullName>Plastocyanin major isoform, chloroplastic</fullName>
    </recommendedName>
    <alternativeName>
        <fullName>DNA-damage-repair/toleration protein DRT112</fullName>
    </alternativeName>
</protein>